<accession>P67983</accession>
<accession>A5PK56</accession>
<accession>P04356</accession>
<accession>P04902</accession>
<feature type="chain" id="PRO_0000197223" description="Metallothionein-1A">
    <location>
        <begin position="1"/>
        <end position="61"/>
    </location>
</feature>
<feature type="region of interest" description="Beta">
    <location>
        <begin position="1"/>
        <end position="29"/>
    </location>
</feature>
<feature type="region of interest" description="Alpha">
    <location>
        <begin position="30"/>
        <end position="61"/>
    </location>
</feature>
<feature type="binding site" evidence="1">
    <location>
        <position position="5"/>
    </location>
    <ligand>
        <name>a divalent metal cation</name>
        <dbReference type="ChEBI" id="CHEBI:60240"/>
        <label>1</label>
        <note>in cluster B</note>
    </ligand>
</feature>
<feature type="binding site" evidence="1">
    <location>
        <position position="7"/>
    </location>
    <ligand>
        <name>a divalent metal cation</name>
        <dbReference type="ChEBI" id="CHEBI:60240"/>
        <label>1</label>
        <note>in cluster B</note>
    </ligand>
</feature>
<feature type="binding site" evidence="1">
    <location>
        <position position="7"/>
    </location>
    <ligand>
        <name>a divalent metal cation</name>
        <dbReference type="ChEBI" id="CHEBI:60240"/>
        <label>2</label>
        <note>in cluster B</note>
    </ligand>
</feature>
<feature type="binding site" evidence="1">
    <location>
        <position position="13"/>
    </location>
    <ligand>
        <name>a divalent metal cation</name>
        <dbReference type="ChEBI" id="CHEBI:60240"/>
        <label>2</label>
        <note>in cluster B</note>
    </ligand>
</feature>
<feature type="binding site" evidence="1">
    <location>
        <position position="15"/>
    </location>
    <ligand>
        <name>a divalent metal cation</name>
        <dbReference type="ChEBI" id="CHEBI:60240"/>
        <label>2</label>
        <note>in cluster B</note>
    </ligand>
</feature>
<feature type="binding site" evidence="1">
    <location>
        <position position="15"/>
    </location>
    <ligand>
        <name>a divalent metal cation</name>
        <dbReference type="ChEBI" id="CHEBI:60240"/>
        <label>3</label>
        <note>in cluster B</note>
    </ligand>
</feature>
<feature type="binding site" evidence="1">
    <location>
        <position position="19"/>
    </location>
    <ligand>
        <name>a divalent metal cation</name>
        <dbReference type="ChEBI" id="CHEBI:60240"/>
        <label>3</label>
        <note>in cluster B</note>
    </ligand>
</feature>
<feature type="binding site" evidence="1">
    <location>
        <position position="21"/>
    </location>
    <ligand>
        <name>a divalent metal cation</name>
        <dbReference type="ChEBI" id="CHEBI:60240"/>
        <label>1</label>
        <note>in cluster B</note>
    </ligand>
</feature>
<feature type="binding site" evidence="1">
    <location>
        <position position="24"/>
    </location>
    <ligand>
        <name>a divalent metal cation</name>
        <dbReference type="ChEBI" id="CHEBI:60240"/>
        <label>1</label>
        <note>in cluster B</note>
    </ligand>
</feature>
<feature type="binding site" evidence="1">
    <location>
        <position position="24"/>
    </location>
    <ligand>
        <name>a divalent metal cation</name>
        <dbReference type="ChEBI" id="CHEBI:60240"/>
        <label>3</label>
        <note>in cluster B</note>
    </ligand>
</feature>
<feature type="binding site" evidence="1">
    <location>
        <position position="26"/>
    </location>
    <ligand>
        <name>a divalent metal cation</name>
        <dbReference type="ChEBI" id="CHEBI:60240"/>
        <label>2</label>
        <note>in cluster B</note>
    </ligand>
</feature>
<feature type="binding site" evidence="1">
    <location>
        <position position="29"/>
    </location>
    <ligand>
        <name>a divalent metal cation</name>
        <dbReference type="ChEBI" id="CHEBI:60240"/>
        <label>3</label>
        <note>in cluster B</note>
    </ligand>
</feature>
<feature type="binding site" evidence="1">
    <location>
        <position position="33"/>
    </location>
    <ligand>
        <name>a divalent metal cation</name>
        <dbReference type="ChEBI" id="CHEBI:60240"/>
        <label>4</label>
        <note>in cluster A</note>
    </ligand>
</feature>
<feature type="binding site" evidence="1">
    <location>
        <position position="34"/>
    </location>
    <ligand>
        <name>a divalent metal cation</name>
        <dbReference type="ChEBI" id="CHEBI:60240"/>
        <label>4</label>
        <note>in cluster A</note>
    </ligand>
</feature>
<feature type="binding site" evidence="1">
    <location>
        <position position="34"/>
    </location>
    <ligand>
        <name>a divalent metal cation</name>
        <dbReference type="ChEBI" id="CHEBI:60240"/>
        <label>5</label>
        <note>in cluster A</note>
    </ligand>
</feature>
<feature type="binding site" evidence="1">
    <location>
        <position position="36"/>
    </location>
    <ligand>
        <name>a divalent metal cation</name>
        <dbReference type="ChEBI" id="CHEBI:60240"/>
        <label>5</label>
        <note>in cluster A</note>
    </ligand>
</feature>
<feature type="binding site" evidence="1">
    <location>
        <position position="37"/>
    </location>
    <ligand>
        <name>a divalent metal cation</name>
        <dbReference type="ChEBI" id="CHEBI:60240"/>
        <label>5</label>
        <note>in cluster A</note>
    </ligand>
</feature>
<feature type="binding site" evidence="1">
    <location>
        <position position="37"/>
    </location>
    <ligand>
        <name>a divalent metal cation</name>
        <dbReference type="ChEBI" id="CHEBI:60240"/>
        <label>6</label>
        <note>in cluster A</note>
    </ligand>
</feature>
<feature type="binding site" evidence="1">
    <location>
        <position position="41"/>
    </location>
    <ligand>
        <name>a divalent metal cation</name>
        <dbReference type="ChEBI" id="CHEBI:60240"/>
        <label>6</label>
        <note>in cluster A</note>
    </ligand>
</feature>
<feature type="binding site" evidence="1">
    <location>
        <position position="44"/>
    </location>
    <ligand>
        <name>a divalent metal cation</name>
        <dbReference type="ChEBI" id="CHEBI:60240"/>
        <label>4</label>
        <note>in cluster A</note>
    </ligand>
</feature>
<feature type="binding site" evidence="1">
    <location>
        <position position="44"/>
    </location>
    <ligand>
        <name>a divalent metal cation</name>
        <dbReference type="ChEBI" id="CHEBI:60240"/>
        <label>6</label>
        <note>in cluster A</note>
    </ligand>
</feature>
<feature type="binding site" evidence="1">
    <location>
        <position position="48"/>
    </location>
    <ligand>
        <name>a divalent metal cation</name>
        <dbReference type="ChEBI" id="CHEBI:60240"/>
        <label>4</label>
        <note>in cluster A</note>
    </ligand>
</feature>
<feature type="binding site" evidence="1">
    <location>
        <position position="50"/>
    </location>
    <ligand>
        <name>a divalent metal cation</name>
        <dbReference type="ChEBI" id="CHEBI:60240"/>
        <label>5</label>
        <note>in cluster A</note>
    </ligand>
</feature>
<feature type="binding site" evidence="1">
    <location>
        <position position="50"/>
    </location>
    <ligand>
        <name>a divalent metal cation</name>
        <dbReference type="ChEBI" id="CHEBI:60240"/>
        <label>7</label>
        <note>in cluster A</note>
    </ligand>
</feature>
<feature type="binding site" evidence="1">
    <location>
        <position position="57"/>
    </location>
    <ligand>
        <name>a divalent metal cation</name>
        <dbReference type="ChEBI" id="CHEBI:60240"/>
        <label>7</label>
        <note>in cluster A</note>
    </ligand>
</feature>
<feature type="binding site" evidence="1">
    <location>
        <position position="59"/>
    </location>
    <ligand>
        <name>a divalent metal cation</name>
        <dbReference type="ChEBI" id="CHEBI:60240"/>
        <label>7</label>
        <note>in cluster A</note>
    </ligand>
</feature>
<feature type="binding site" evidence="1">
    <location>
        <position position="60"/>
    </location>
    <ligand>
        <name>a divalent metal cation</name>
        <dbReference type="ChEBI" id="CHEBI:60240"/>
        <label>6</label>
        <note>in cluster A</note>
    </ligand>
</feature>
<feature type="binding site" evidence="1">
    <location>
        <position position="60"/>
    </location>
    <ligand>
        <name>a divalent metal cation</name>
        <dbReference type="ChEBI" id="CHEBI:60240"/>
        <label>7</label>
        <note>in cluster A</note>
    </ligand>
</feature>
<feature type="modified residue" description="N-acetylmethionine" evidence="2">
    <location>
        <position position="1"/>
    </location>
</feature>
<feature type="modified residue" description="Phosphoserine" evidence="1">
    <location>
        <position position="58"/>
    </location>
</feature>
<proteinExistence type="evidence at protein level"/>
<dbReference type="EMBL" id="M76977">
    <property type="protein sequence ID" value="AAA30637.1"/>
    <property type="molecule type" value="Genomic_DNA"/>
</dbReference>
<dbReference type="EMBL" id="BC142364">
    <property type="protein sequence ID" value="AAI42365.1"/>
    <property type="molecule type" value="mRNA"/>
</dbReference>
<dbReference type="RefSeq" id="NP_001035582.1">
    <property type="nucleotide sequence ID" value="NM_001040492.2"/>
</dbReference>
<dbReference type="SMR" id="P67983"/>
<dbReference type="FunCoup" id="P67983">
    <property type="interactions" value="64"/>
</dbReference>
<dbReference type="STRING" id="9913.ENSBTAP00000069516"/>
<dbReference type="PaxDb" id="9913-ENSBTAP00000002092"/>
<dbReference type="GeneID" id="404071"/>
<dbReference type="KEGG" id="bta:404071"/>
<dbReference type="CTD" id="4489"/>
<dbReference type="eggNOG" id="KOG4738">
    <property type="taxonomic scope" value="Eukaryota"/>
</dbReference>
<dbReference type="HOGENOM" id="CLU_171204_2_0_1"/>
<dbReference type="InParanoid" id="P67983"/>
<dbReference type="OrthoDB" id="9644073at2759"/>
<dbReference type="TreeFam" id="TF336054"/>
<dbReference type="Proteomes" id="UP000009136">
    <property type="component" value="Unplaced"/>
</dbReference>
<dbReference type="GO" id="GO:0005737">
    <property type="term" value="C:cytoplasm"/>
    <property type="evidence" value="ECO:0000250"/>
    <property type="project" value="UniProtKB"/>
</dbReference>
<dbReference type="GO" id="GO:0005634">
    <property type="term" value="C:nucleus"/>
    <property type="evidence" value="ECO:0000250"/>
    <property type="project" value="UniProtKB"/>
</dbReference>
<dbReference type="GO" id="GO:0046872">
    <property type="term" value="F:metal ion binding"/>
    <property type="evidence" value="ECO:0000318"/>
    <property type="project" value="GO_Central"/>
</dbReference>
<dbReference type="GO" id="GO:0008270">
    <property type="term" value="F:zinc ion binding"/>
    <property type="evidence" value="ECO:0000250"/>
    <property type="project" value="UniProtKB"/>
</dbReference>
<dbReference type="GO" id="GO:0071276">
    <property type="term" value="P:cellular response to cadmium ion"/>
    <property type="evidence" value="ECO:0000318"/>
    <property type="project" value="GO_Central"/>
</dbReference>
<dbReference type="GO" id="GO:0071280">
    <property type="term" value="P:cellular response to copper ion"/>
    <property type="evidence" value="ECO:0000318"/>
    <property type="project" value="GO_Central"/>
</dbReference>
<dbReference type="GO" id="GO:0071294">
    <property type="term" value="P:cellular response to zinc ion"/>
    <property type="evidence" value="ECO:0000250"/>
    <property type="project" value="UniProtKB"/>
</dbReference>
<dbReference type="GO" id="GO:0010273">
    <property type="term" value="P:detoxification of copper ion"/>
    <property type="evidence" value="ECO:0000318"/>
    <property type="project" value="GO_Central"/>
</dbReference>
<dbReference type="GO" id="GO:0006882">
    <property type="term" value="P:intracellular zinc ion homeostasis"/>
    <property type="evidence" value="ECO:0000318"/>
    <property type="project" value="GO_Central"/>
</dbReference>
<dbReference type="GO" id="GO:0045926">
    <property type="term" value="P:negative regulation of growth"/>
    <property type="evidence" value="ECO:0000250"/>
    <property type="project" value="UniProtKB"/>
</dbReference>
<dbReference type="FunFam" id="4.10.10.10:FF:000001">
    <property type="entry name" value="Metallothionein"/>
    <property type="match status" value="1"/>
</dbReference>
<dbReference type="Gene3D" id="4.10.10.10">
    <property type="entry name" value="Metallothionein Isoform II"/>
    <property type="match status" value="1"/>
</dbReference>
<dbReference type="InterPro" id="IPR017854">
    <property type="entry name" value="Metalthion_dom_sf"/>
</dbReference>
<dbReference type="InterPro" id="IPR023587">
    <property type="entry name" value="Metalthion_dom_sf_vert"/>
</dbReference>
<dbReference type="InterPro" id="IPR000006">
    <property type="entry name" value="Metalthion_vert"/>
</dbReference>
<dbReference type="InterPro" id="IPR018064">
    <property type="entry name" value="Metalthion_vert_metal_BS"/>
</dbReference>
<dbReference type="PANTHER" id="PTHR23299">
    <property type="entry name" value="METALLOTHIONEIN"/>
    <property type="match status" value="1"/>
</dbReference>
<dbReference type="PANTHER" id="PTHR23299:SF22">
    <property type="entry name" value="METALLOTHIONEIN-1G"/>
    <property type="match status" value="1"/>
</dbReference>
<dbReference type="Pfam" id="PF00131">
    <property type="entry name" value="Metallothio"/>
    <property type="match status" value="1"/>
</dbReference>
<dbReference type="PRINTS" id="PR00860">
    <property type="entry name" value="MTVERTEBRATE"/>
</dbReference>
<dbReference type="SUPFAM" id="SSF57868">
    <property type="entry name" value="Metallothionein"/>
    <property type="match status" value="1"/>
</dbReference>
<dbReference type="PROSITE" id="PS00203">
    <property type="entry name" value="METALLOTHIONEIN_VRT"/>
    <property type="match status" value="1"/>
</dbReference>
<organism>
    <name type="scientific">Bos taurus</name>
    <name type="common">Bovine</name>
    <dbReference type="NCBI Taxonomy" id="9913"/>
    <lineage>
        <taxon>Eukaryota</taxon>
        <taxon>Metazoa</taxon>
        <taxon>Chordata</taxon>
        <taxon>Craniata</taxon>
        <taxon>Vertebrata</taxon>
        <taxon>Euteleostomi</taxon>
        <taxon>Mammalia</taxon>
        <taxon>Eutheria</taxon>
        <taxon>Laurasiatheria</taxon>
        <taxon>Artiodactyla</taxon>
        <taxon>Ruminantia</taxon>
        <taxon>Pecora</taxon>
        <taxon>Bovidae</taxon>
        <taxon>Bovinae</taxon>
        <taxon>Bos</taxon>
    </lineage>
</organism>
<protein>
    <recommendedName>
        <fullName>Metallothionein-1A</fullName>
        <shortName>MT-1A</shortName>
    </recommendedName>
    <alternativeName>
        <fullName>MTC</fullName>
    </alternativeName>
    <alternativeName>
        <fullName>Metallothionein-IA</fullName>
        <shortName>MT-IA</shortName>
    </alternativeName>
</protein>
<comment type="function">
    <text>Metallothioneins have a high content of cysteine residues that bind various heavy metals; these proteins are transcriptionally regulated by both heavy metals and glucocorticoids.</text>
</comment>
<comment type="subunit">
    <text>Monomer.</text>
</comment>
<comment type="domain">
    <text>Class I metallothioneins contain 2 metal-binding domains: four divalent ions are chelated within cluster A of the alpha domain and are coordinated via cysteinyl thiolate bridges to 11 cysteine ligands. Cluster B, the corresponding region within the beta domain, can ligate three divalent ions to 9 cysteines.</text>
</comment>
<comment type="similarity">
    <text evidence="3">Belongs to the metallothionein superfamily. Type 1 family.</text>
</comment>
<sequence>MDPNCSCPTGGSCSCAGSCTCKACRCPSCKKSCCSCCPVGCAKCAQGCVCKGASDKCSCCA</sequence>
<keyword id="KW-0007">Acetylation</keyword>
<keyword id="KW-0903">Direct protein sequencing</keyword>
<keyword id="KW-0479">Metal-binding</keyword>
<keyword id="KW-0480">Metal-thiolate cluster</keyword>
<keyword id="KW-0597">Phosphoprotein</keyword>
<keyword id="KW-1185">Reference proteome</keyword>
<name>MT1A_BOVIN</name>
<gene>
    <name type="primary">MT1A</name>
    <name type="synonym">MT-IA</name>
</gene>
<evidence type="ECO:0000250" key="1">
    <source>
        <dbReference type="UniProtKB" id="P02795"/>
    </source>
</evidence>
<evidence type="ECO:0000250" key="2">
    <source>
        <dbReference type="UniProtKB" id="P11957"/>
    </source>
</evidence>
<evidence type="ECO:0000305" key="3"/>
<reference key="1">
    <citation type="journal article" date="1986" name="Arch. Biochem. Biophys.">
        <title>Sequence and antigenicity of calf metallothionein II.</title>
        <authorList>
            <person name="Winge D.R."/>
            <person name="Gray W.R."/>
            <person name="Zelazowski A."/>
            <person name="Garvey J.S."/>
        </authorList>
    </citation>
    <scope>PROTEIN SEQUENCE</scope>
    <source>
        <tissue>Liver</tissue>
    </source>
</reference>
<reference key="2">
    <citation type="journal article" date="1993" name="Chin. Sci. Bull.">
        <title>Nucleotide sequence and characterization of bovine metallothionein gene.</title>
        <authorList>
            <person name="Yang J."/>
            <person name="Shen X.-Z."/>
            <person name="Yang W.-M."/>
            <person name="Peterson M.G."/>
            <person name="Mercer J.F.B."/>
            <person name="Woo S.L.C."/>
        </authorList>
    </citation>
    <scope>NUCLEOTIDE SEQUENCE [GENOMIC DNA]</scope>
</reference>
<reference key="3">
    <citation type="submission" date="2007-06" db="EMBL/GenBank/DDBJ databases">
        <authorList>
            <consortium name="NIH - Mammalian Gene Collection (MGC) project"/>
        </authorList>
    </citation>
    <scope>NUCLEOTIDE SEQUENCE [LARGE SCALE MRNA]</scope>
    <source>
        <strain>Crossbred X Angus</strain>
        <tissue>Liver</tissue>
    </source>
</reference>